<comment type="catalytic activity">
    <reaction evidence="1">
        <text>a plastoquinone + NADH + (n+1) H(+)(in) = a plastoquinol + NAD(+) + n H(+)(out)</text>
        <dbReference type="Rhea" id="RHEA:42608"/>
        <dbReference type="Rhea" id="RHEA-COMP:9561"/>
        <dbReference type="Rhea" id="RHEA-COMP:9562"/>
        <dbReference type="ChEBI" id="CHEBI:15378"/>
        <dbReference type="ChEBI" id="CHEBI:17757"/>
        <dbReference type="ChEBI" id="CHEBI:57540"/>
        <dbReference type="ChEBI" id="CHEBI:57945"/>
        <dbReference type="ChEBI" id="CHEBI:62192"/>
    </reaction>
</comment>
<comment type="catalytic activity">
    <reaction evidence="1">
        <text>a plastoquinone + NADPH + (n+1) H(+)(in) = a plastoquinol + NADP(+) + n H(+)(out)</text>
        <dbReference type="Rhea" id="RHEA:42612"/>
        <dbReference type="Rhea" id="RHEA-COMP:9561"/>
        <dbReference type="Rhea" id="RHEA-COMP:9562"/>
        <dbReference type="ChEBI" id="CHEBI:15378"/>
        <dbReference type="ChEBI" id="CHEBI:17757"/>
        <dbReference type="ChEBI" id="CHEBI:57783"/>
        <dbReference type="ChEBI" id="CHEBI:58349"/>
        <dbReference type="ChEBI" id="CHEBI:62192"/>
    </reaction>
</comment>
<comment type="subcellular location">
    <subcellularLocation>
        <location evidence="1">Plastid</location>
        <location evidence="1">Chloroplast thylakoid membrane</location>
        <topology evidence="1">Multi-pass membrane protein</topology>
    </subcellularLocation>
</comment>
<comment type="similarity">
    <text evidence="1">Belongs to the complex I subunit 4 family.</text>
</comment>
<accession>B0Z593</accession>
<feature type="chain" id="PRO_0000343298" description="NAD(P)H-quinone oxidoreductase chain 4, chloroplastic">
    <location>
        <begin position="1"/>
        <end position="500"/>
    </location>
</feature>
<feature type="transmembrane region" description="Helical" evidence="1">
    <location>
        <begin position="4"/>
        <end position="24"/>
    </location>
</feature>
<feature type="transmembrane region" description="Helical" evidence="1">
    <location>
        <begin position="37"/>
        <end position="57"/>
    </location>
</feature>
<feature type="transmembrane region" description="Helical" evidence="1">
    <location>
        <begin position="87"/>
        <end position="107"/>
    </location>
</feature>
<feature type="transmembrane region" description="Helical" evidence="1">
    <location>
        <begin position="111"/>
        <end position="131"/>
    </location>
</feature>
<feature type="transmembrane region" description="Helical" evidence="1">
    <location>
        <begin position="134"/>
        <end position="154"/>
    </location>
</feature>
<feature type="transmembrane region" description="Helical" evidence="1">
    <location>
        <begin position="167"/>
        <end position="187"/>
    </location>
</feature>
<feature type="transmembrane region" description="Helical" evidence="1">
    <location>
        <begin position="208"/>
        <end position="228"/>
    </location>
</feature>
<feature type="transmembrane region" description="Helical" evidence="1">
    <location>
        <begin position="242"/>
        <end position="262"/>
    </location>
</feature>
<feature type="transmembrane region" description="Helical" evidence="1">
    <location>
        <begin position="272"/>
        <end position="292"/>
    </location>
</feature>
<feature type="transmembrane region" description="Helical" evidence="1">
    <location>
        <begin position="305"/>
        <end position="325"/>
    </location>
</feature>
<feature type="transmembrane region" description="Helical" evidence="1">
    <location>
        <begin position="330"/>
        <end position="350"/>
    </location>
</feature>
<feature type="transmembrane region" description="Helical" evidence="1">
    <location>
        <begin position="386"/>
        <end position="406"/>
    </location>
</feature>
<feature type="transmembrane region" description="Helical" evidence="1">
    <location>
        <begin position="416"/>
        <end position="436"/>
    </location>
</feature>
<feature type="transmembrane region" description="Helical" evidence="1">
    <location>
        <begin position="462"/>
        <end position="482"/>
    </location>
</feature>
<reference key="1">
    <citation type="journal article" date="2008" name="Nucleic Acids Res.">
        <title>The complete nucleotide sequences of the five genetically distinct plastid genomes of Oenothera, subsection Oenothera: I. Sequence evaluation and plastome evolution.</title>
        <authorList>
            <person name="Greiner S."/>
            <person name="Wang X."/>
            <person name="Rauwolf U."/>
            <person name="Silber M.V."/>
            <person name="Mayer K."/>
            <person name="Meurer J."/>
            <person name="Haberer G."/>
            <person name="Herrmann R.G."/>
        </authorList>
    </citation>
    <scope>NUCLEOTIDE SEQUENCE [LARGE SCALE GENOMIC DNA]</scope>
    <source>
        <strain>cv. Rr-lamarckiana Sweden</strain>
    </source>
</reference>
<keyword id="KW-0150">Chloroplast</keyword>
<keyword id="KW-0472">Membrane</keyword>
<keyword id="KW-0520">NAD</keyword>
<keyword id="KW-0521">NADP</keyword>
<keyword id="KW-0934">Plastid</keyword>
<keyword id="KW-0618">Plastoquinone</keyword>
<keyword id="KW-0874">Quinone</keyword>
<keyword id="KW-0793">Thylakoid</keyword>
<keyword id="KW-1278">Translocase</keyword>
<keyword id="KW-0812">Transmembrane</keyword>
<keyword id="KW-1133">Transmembrane helix</keyword>
<gene>
    <name evidence="1" type="primary">ndhD</name>
</gene>
<proteinExistence type="inferred from homology"/>
<dbReference type="EC" id="7.1.1.-" evidence="1"/>
<dbReference type="EMBL" id="EU262890">
    <property type="protein sequence ID" value="ABX10086.1"/>
    <property type="molecule type" value="Genomic_DNA"/>
</dbReference>
<dbReference type="RefSeq" id="YP_001687332.1">
    <property type="nucleotide sequence ID" value="NC_010360.2"/>
</dbReference>
<dbReference type="SMR" id="B0Z593"/>
<dbReference type="GeneID" id="5955270"/>
<dbReference type="GO" id="GO:0009535">
    <property type="term" value="C:chloroplast thylakoid membrane"/>
    <property type="evidence" value="ECO:0007669"/>
    <property type="project" value="UniProtKB-SubCell"/>
</dbReference>
<dbReference type="GO" id="GO:0008137">
    <property type="term" value="F:NADH dehydrogenase (ubiquinone) activity"/>
    <property type="evidence" value="ECO:0007669"/>
    <property type="project" value="InterPro"/>
</dbReference>
<dbReference type="GO" id="GO:0048039">
    <property type="term" value="F:ubiquinone binding"/>
    <property type="evidence" value="ECO:0007669"/>
    <property type="project" value="TreeGrafter"/>
</dbReference>
<dbReference type="GO" id="GO:0042773">
    <property type="term" value="P:ATP synthesis coupled electron transport"/>
    <property type="evidence" value="ECO:0007669"/>
    <property type="project" value="InterPro"/>
</dbReference>
<dbReference type="GO" id="GO:0015990">
    <property type="term" value="P:electron transport coupled proton transport"/>
    <property type="evidence" value="ECO:0007669"/>
    <property type="project" value="TreeGrafter"/>
</dbReference>
<dbReference type="HAMAP" id="MF_00491">
    <property type="entry name" value="NDH1_NuoM"/>
    <property type="match status" value="1"/>
</dbReference>
<dbReference type="InterPro" id="IPR022997">
    <property type="entry name" value="NADH_Q_OxRdtase_chain4"/>
</dbReference>
<dbReference type="InterPro" id="IPR010227">
    <property type="entry name" value="NADH_Q_OxRdtase_chainM/4"/>
</dbReference>
<dbReference type="InterPro" id="IPR003918">
    <property type="entry name" value="NADH_UbQ_OxRdtase"/>
</dbReference>
<dbReference type="InterPro" id="IPR001750">
    <property type="entry name" value="ND/Mrp_TM"/>
</dbReference>
<dbReference type="NCBIfam" id="TIGR01972">
    <property type="entry name" value="NDH_I_M"/>
    <property type="match status" value="1"/>
</dbReference>
<dbReference type="PANTHER" id="PTHR43507:SF21">
    <property type="entry name" value="NAD(P)H-QUINONE OXIDOREDUCTASE CHAIN 4, CHLOROPLASTIC"/>
    <property type="match status" value="1"/>
</dbReference>
<dbReference type="PANTHER" id="PTHR43507">
    <property type="entry name" value="NADH-UBIQUINONE OXIDOREDUCTASE CHAIN 4"/>
    <property type="match status" value="1"/>
</dbReference>
<dbReference type="Pfam" id="PF00361">
    <property type="entry name" value="Proton_antipo_M"/>
    <property type="match status" value="1"/>
</dbReference>
<dbReference type="PRINTS" id="PR01437">
    <property type="entry name" value="NUOXDRDTASE4"/>
</dbReference>
<geneLocation type="chloroplast"/>
<sequence length="500" mass="56033">MNSFPWLTIIVVFPILTGSLIFLLPHRGNKVMKWYTLCICILELLLTTYTFCYHFQLDDPLTQLTENYKWIHFFDFYWRLGIDGLSIGPILLTGFITTLATLAAWPVTRDAQLFHFLMLAMYSGQIGSFSSRDLLLFFLMWEFELIPVYLLLSMWGGKKRLYSATKFILYTAGGSIFLLIGVLGIGLYGSNEPTLNFETLANQSYPVALEVIFYVGFLIAFAVKLPIIPFHTWLPDTHGEAHYSTCMLLAGILLKMGAYGLVRINMELLPHAHCLFSPGLIIVGAIQIIYAASTSPGQLNLKKRIAYSSISHMGFIIIGIGSLSDTGLNGAILQIISHGFIGAALFFLAGTSYDRIRLLYLDEMGGMAIPLPKLFTMLSILSMASLALPGLSGFVAELLVFFGIITSQKYLLMPKILIAFLMAIGMILTPIYSLSMLRQMFYGYKLFNVPNYYFFDSGPRELFVSISLLLPIIGIGIYPDFVLSLSVEKVEAIISHFFFR</sequence>
<evidence type="ECO:0000255" key="1">
    <source>
        <dbReference type="HAMAP-Rule" id="MF_00491"/>
    </source>
</evidence>
<name>NU4C_OENGL</name>
<protein>
    <recommendedName>
        <fullName evidence="1">NAD(P)H-quinone oxidoreductase chain 4, chloroplastic</fullName>
        <ecNumber evidence="1">7.1.1.-</ecNumber>
    </recommendedName>
    <alternativeName>
        <fullName evidence="1">NAD(P)H dehydrogenase, chain 4</fullName>
    </alternativeName>
    <alternativeName>
        <fullName evidence="1">NADH-plastoquinone oxidoreductase chain 4</fullName>
    </alternativeName>
</protein>
<organism>
    <name type="scientific">Oenothera glazioviana</name>
    <name type="common">Large-flowered evening primrose</name>
    <name type="synonym">Oenothera erythrosepala</name>
    <dbReference type="NCBI Taxonomy" id="482428"/>
    <lineage>
        <taxon>Eukaryota</taxon>
        <taxon>Viridiplantae</taxon>
        <taxon>Streptophyta</taxon>
        <taxon>Embryophyta</taxon>
        <taxon>Tracheophyta</taxon>
        <taxon>Spermatophyta</taxon>
        <taxon>Magnoliopsida</taxon>
        <taxon>eudicotyledons</taxon>
        <taxon>Gunneridae</taxon>
        <taxon>Pentapetalae</taxon>
        <taxon>rosids</taxon>
        <taxon>malvids</taxon>
        <taxon>Myrtales</taxon>
        <taxon>Onagraceae</taxon>
        <taxon>Onagroideae</taxon>
        <taxon>Onagreae</taxon>
        <taxon>Oenothera</taxon>
    </lineage>
</organism>